<proteinExistence type="evidence at protein level"/>
<dbReference type="EMBL" id="AL123456">
    <property type="protein sequence ID" value="CCP46499.1"/>
    <property type="molecule type" value="Genomic_DNA"/>
</dbReference>
<dbReference type="PIR" id="E70790">
    <property type="entry name" value="E70790"/>
</dbReference>
<dbReference type="RefSeq" id="NP_218193.1">
    <property type="nucleotide sequence ID" value="NC_000962.3"/>
</dbReference>
<dbReference type="RefSeq" id="WP_003419728.1">
    <property type="nucleotide sequence ID" value="NZ_NVQJ01000028.1"/>
</dbReference>
<dbReference type="PDB" id="3D0S">
    <property type="method" value="X-ray"/>
    <property type="resolution" value="2.00 A"/>
    <property type="chains" value="A/B=1-224"/>
</dbReference>
<dbReference type="PDB" id="3H3U">
    <property type="method" value="X-ray"/>
    <property type="resolution" value="2.90 A"/>
    <property type="chains" value="A/B=1-224"/>
</dbReference>
<dbReference type="PDB" id="3I54">
    <property type="method" value="X-ray"/>
    <property type="resolution" value="2.20 A"/>
    <property type="chains" value="A/B/C/D=1-224"/>
</dbReference>
<dbReference type="PDB" id="3I59">
    <property type="method" value="X-ray"/>
    <property type="resolution" value="2.29 A"/>
    <property type="chains" value="A/B=1-224"/>
</dbReference>
<dbReference type="PDB" id="3MZH">
    <property type="method" value="X-ray"/>
    <property type="resolution" value="2.90 A"/>
    <property type="chains" value="A/B=1-224"/>
</dbReference>
<dbReference type="PDB" id="4A2U">
    <property type="method" value="X-ray"/>
    <property type="resolution" value="2.63 A"/>
    <property type="chains" value="A/B/C/D/E/F/G/H=1-224"/>
</dbReference>
<dbReference type="PDBsum" id="3D0S"/>
<dbReference type="PDBsum" id="3H3U"/>
<dbReference type="PDBsum" id="3I54"/>
<dbReference type="PDBsum" id="3I59"/>
<dbReference type="PDBsum" id="3MZH"/>
<dbReference type="PDBsum" id="4A2U"/>
<dbReference type="SMR" id="P9WMH3"/>
<dbReference type="FunCoup" id="P9WMH3">
    <property type="interactions" value="94"/>
</dbReference>
<dbReference type="STRING" id="83332.Rv3676"/>
<dbReference type="PaxDb" id="83332-Rv3676"/>
<dbReference type="GeneID" id="885502"/>
<dbReference type="KEGG" id="mtu:Rv3676"/>
<dbReference type="KEGG" id="mtv:RVBD_3676"/>
<dbReference type="TubercuList" id="Rv3676"/>
<dbReference type="eggNOG" id="COG0664">
    <property type="taxonomic scope" value="Bacteria"/>
</dbReference>
<dbReference type="InParanoid" id="P9WMH3"/>
<dbReference type="OrthoDB" id="892842at2"/>
<dbReference type="PhylomeDB" id="P9WMH3"/>
<dbReference type="EvolutionaryTrace" id="P9WMH3"/>
<dbReference type="Proteomes" id="UP000001584">
    <property type="component" value="Chromosome"/>
</dbReference>
<dbReference type="GO" id="GO:0005829">
    <property type="term" value="C:cytosol"/>
    <property type="evidence" value="ECO:0000318"/>
    <property type="project" value="GO_Central"/>
</dbReference>
<dbReference type="GO" id="GO:0009274">
    <property type="term" value="C:peptidoglycan-based cell wall"/>
    <property type="evidence" value="ECO:0007005"/>
    <property type="project" value="MTBBASE"/>
</dbReference>
<dbReference type="GO" id="GO:0005886">
    <property type="term" value="C:plasma membrane"/>
    <property type="evidence" value="ECO:0007005"/>
    <property type="project" value="MTBBASE"/>
</dbReference>
<dbReference type="GO" id="GO:0030552">
    <property type="term" value="F:cAMP binding"/>
    <property type="evidence" value="ECO:0000314"/>
    <property type="project" value="MTBBASE"/>
</dbReference>
<dbReference type="GO" id="GO:0003677">
    <property type="term" value="F:DNA binding"/>
    <property type="evidence" value="ECO:0000314"/>
    <property type="project" value="MTBBASE"/>
</dbReference>
<dbReference type="GO" id="GO:0003700">
    <property type="term" value="F:DNA-binding transcription factor activity"/>
    <property type="evidence" value="ECO:0000314"/>
    <property type="project" value="MTBBASE"/>
</dbReference>
<dbReference type="GO" id="GO:0045892">
    <property type="term" value="P:negative regulation of DNA-templated transcription"/>
    <property type="evidence" value="ECO:0000314"/>
    <property type="project" value="MTBBASE"/>
</dbReference>
<dbReference type="GO" id="GO:0045893">
    <property type="term" value="P:positive regulation of DNA-templated transcription"/>
    <property type="evidence" value="ECO:0000314"/>
    <property type="project" value="MTBBASE"/>
</dbReference>
<dbReference type="GO" id="GO:0006355">
    <property type="term" value="P:regulation of DNA-templated transcription"/>
    <property type="evidence" value="ECO:0000314"/>
    <property type="project" value="MTBBASE"/>
</dbReference>
<dbReference type="CDD" id="cd00038">
    <property type="entry name" value="CAP_ED"/>
    <property type="match status" value="1"/>
</dbReference>
<dbReference type="FunFam" id="1.10.10.10:FF:000019">
    <property type="entry name" value="Crp/Fnr family transcriptional regulator"/>
    <property type="match status" value="1"/>
</dbReference>
<dbReference type="FunFam" id="2.60.120.10:FF:000003">
    <property type="entry name" value="Crp/Fnr family transcriptional regulator"/>
    <property type="match status" value="1"/>
</dbReference>
<dbReference type="Gene3D" id="2.60.120.10">
    <property type="entry name" value="Jelly Rolls"/>
    <property type="match status" value="1"/>
</dbReference>
<dbReference type="Gene3D" id="1.10.10.10">
    <property type="entry name" value="Winged helix-like DNA-binding domain superfamily/Winged helix DNA-binding domain"/>
    <property type="match status" value="1"/>
</dbReference>
<dbReference type="InterPro" id="IPR000595">
    <property type="entry name" value="cNMP-bd_dom"/>
</dbReference>
<dbReference type="InterPro" id="IPR018490">
    <property type="entry name" value="cNMP-bd_dom_sf"/>
</dbReference>
<dbReference type="InterPro" id="IPR050397">
    <property type="entry name" value="Env_Response_Regulators"/>
</dbReference>
<dbReference type="InterPro" id="IPR012318">
    <property type="entry name" value="HTH_CRP"/>
</dbReference>
<dbReference type="InterPro" id="IPR014710">
    <property type="entry name" value="RmlC-like_jellyroll"/>
</dbReference>
<dbReference type="InterPro" id="IPR036388">
    <property type="entry name" value="WH-like_DNA-bd_sf"/>
</dbReference>
<dbReference type="InterPro" id="IPR036390">
    <property type="entry name" value="WH_DNA-bd_sf"/>
</dbReference>
<dbReference type="PANTHER" id="PTHR24567">
    <property type="entry name" value="CRP FAMILY TRANSCRIPTIONAL REGULATORY PROTEIN"/>
    <property type="match status" value="1"/>
</dbReference>
<dbReference type="PANTHER" id="PTHR24567:SF74">
    <property type="entry name" value="HTH-TYPE TRANSCRIPTIONAL REGULATOR ARCR"/>
    <property type="match status" value="1"/>
</dbReference>
<dbReference type="Pfam" id="PF00027">
    <property type="entry name" value="cNMP_binding"/>
    <property type="match status" value="1"/>
</dbReference>
<dbReference type="Pfam" id="PF13545">
    <property type="entry name" value="HTH_Crp_2"/>
    <property type="match status" value="1"/>
</dbReference>
<dbReference type="SMART" id="SM00100">
    <property type="entry name" value="cNMP"/>
    <property type="match status" value="1"/>
</dbReference>
<dbReference type="SMART" id="SM00419">
    <property type="entry name" value="HTH_CRP"/>
    <property type="match status" value="1"/>
</dbReference>
<dbReference type="SUPFAM" id="SSF51206">
    <property type="entry name" value="cAMP-binding domain-like"/>
    <property type="match status" value="1"/>
</dbReference>
<dbReference type="SUPFAM" id="SSF46785">
    <property type="entry name" value="Winged helix' DNA-binding domain"/>
    <property type="match status" value="1"/>
</dbReference>
<dbReference type="PROSITE" id="PS50042">
    <property type="entry name" value="CNMP_BINDING_3"/>
    <property type="match status" value="1"/>
</dbReference>
<dbReference type="PROSITE" id="PS51063">
    <property type="entry name" value="HTH_CRP_2"/>
    <property type="match status" value="1"/>
</dbReference>
<accession>P9WMH3</accession>
<accession>F2GFB8</accession>
<accession>L0TDH2</accession>
<accession>O69644</accession>
<accession>Q7D534</accession>
<gene>
    <name evidence="8" type="primary">crp</name>
    <name type="ordered locus">Rv3676</name>
</gene>
<organism>
    <name type="scientific">Mycobacterium tuberculosis (strain ATCC 25618 / H37Rv)</name>
    <dbReference type="NCBI Taxonomy" id="83332"/>
    <lineage>
        <taxon>Bacteria</taxon>
        <taxon>Bacillati</taxon>
        <taxon>Actinomycetota</taxon>
        <taxon>Actinomycetes</taxon>
        <taxon>Mycobacteriales</taxon>
        <taxon>Mycobacteriaceae</taxon>
        <taxon>Mycobacterium</taxon>
        <taxon>Mycobacterium tuberculosis complex</taxon>
    </lineage>
</organism>
<reference key="1">
    <citation type="journal article" date="1998" name="Nature">
        <title>Deciphering the biology of Mycobacterium tuberculosis from the complete genome sequence.</title>
        <authorList>
            <person name="Cole S.T."/>
            <person name="Brosch R."/>
            <person name="Parkhill J."/>
            <person name="Garnier T."/>
            <person name="Churcher C.M."/>
            <person name="Harris D.E."/>
            <person name="Gordon S.V."/>
            <person name="Eiglmeier K."/>
            <person name="Gas S."/>
            <person name="Barry C.E. III"/>
            <person name="Tekaia F."/>
            <person name="Badcock K."/>
            <person name="Basham D."/>
            <person name="Brown D."/>
            <person name="Chillingworth T."/>
            <person name="Connor R."/>
            <person name="Davies R.M."/>
            <person name="Devlin K."/>
            <person name="Feltwell T."/>
            <person name="Gentles S."/>
            <person name="Hamlin N."/>
            <person name="Holroyd S."/>
            <person name="Hornsby T."/>
            <person name="Jagels K."/>
            <person name="Krogh A."/>
            <person name="McLean J."/>
            <person name="Moule S."/>
            <person name="Murphy L.D."/>
            <person name="Oliver S."/>
            <person name="Osborne J."/>
            <person name="Quail M.A."/>
            <person name="Rajandream M.A."/>
            <person name="Rogers J."/>
            <person name="Rutter S."/>
            <person name="Seeger K."/>
            <person name="Skelton S."/>
            <person name="Squares S."/>
            <person name="Squares R."/>
            <person name="Sulston J.E."/>
            <person name="Taylor K."/>
            <person name="Whitehead S."/>
            <person name="Barrell B.G."/>
        </authorList>
    </citation>
    <scope>NUCLEOTIDE SEQUENCE [LARGE SCALE GENOMIC DNA]</scope>
    <source>
        <strain>ATCC 25618 / H37Rv</strain>
    </source>
</reference>
<reference key="2">
    <citation type="journal article" date="2005" name="J. Bacteriol.">
        <title>Characterization of Mycobacterium tuberculosis Rv3676 (CRPMt), a cyclic AMP receptor protein-like DNA binding protein.</title>
        <authorList>
            <person name="Bai G."/>
            <person name="McCue L.A."/>
            <person name="McDonough K.A."/>
        </authorList>
    </citation>
    <scope>DNA-BINDING</scope>
    <scope>DNA-BENDING</scope>
    <scope>PROBABLE CAMP-BINDING</scope>
    <source>
        <strain>ATCC 25618 / H37Rv</strain>
    </source>
</reference>
<reference key="3">
    <citation type="journal article" date="2005" name="Mol. Microbiol.">
        <title>A member of the cAMP receptor protein family of transcription regulators in Mycobacterium tuberculosis is required for virulence in mice and controls transcription of the rpfA gene coding for a resuscitation promoting factor.</title>
        <authorList>
            <person name="Rickman L."/>
            <person name="Scott C."/>
            <person name="Hunt D.M."/>
            <person name="Hutchinson T."/>
            <person name="Menendez M.C."/>
            <person name="Whalan R."/>
            <person name="Hinds J."/>
            <person name="Colston M.J."/>
            <person name="Green J."/>
            <person name="Buxton R.S."/>
        </authorList>
    </citation>
    <scope>FUNCTION AS A TRANSCRIPTION REGULATOR</scope>
    <scope>DNA-BINDING</scope>
    <scope>DISRUPTION PHENOTYPE</scope>
    <source>
        <strain>ATCC 25618 / H37Rv</strain>
    </source>
</reference>
<reference key="4">
    <citation type="journal article" date="2010" name="J. Biol. Chem.">
        <title>Mycobacterium tuberculosis cAMP receptor protein (Rv3676) differs from the Escherichia coli paradigm in its cAMP binding and DNA binding properties and transcription activation properties.</title>
        <authorList>
            <person name="Stapleton M."/>
            <person name="Haq I."/>
            <person name="Hunt D.M."/>
            <person name="Arnvig K.B."/>
            <person name="Artymiuk P.J."/>
            <person name="Buxton R.S."/>
            <person name="Green J."/>
        </authorList>
    </citation>
    <scope>FUNCTION</scope>
    <scope>SUBUNIT</scope>
    <scope>DNA-BINDING</scope>
    <scope>CAMP-BINDING</scope>
    <source>
        <strain>ATCC 25618 / H37Rv</strain>
    </source>
</reference>
<reference key="5">
    <citation type="journal article" date="2011" name="Mol. Cell. Proteomics">
        <title>Proteogenomic analysis of Mycobacterium tuberculosis by high resolution mass spectrometry.</title>
        <authorList>
            <person name="Kelkar D.S."/>
            <person name="Kumar D."/>
            <person name="Kumar P."/>
            <person name="Balakrishnan L."/>
            <person name="Muthusamy B."/>
            <person name="Yadav A.K."/>
            <person name="Shrivastava P."/>
            <person name="Marimuthu A."/>
            <person name="Anand S."/>
            <person name="Sundaram H."/>
            <person name="Kingsbury R."/>
            <person name="Harsha H.C."/>
            <person name="Nair B."/>
            <person name="Prasad T.S."/>
            <person name="Chauhan D.S."/>
            <person name="Katoch K."/>
            <person name="Katoch V.M."/>
            <person name="Kumar P."/>
            <person name="Chaerkady R."/>
            <person name="Ramachandran S."/>
            <person name="Dash D."/>
            <person name="Pandey A."/>
        </authorList>
    </citation>
    <scope>IDENTIFICATION BY MASS SPECTROMETRY [LARGE SCALE ANALYSIS]</scope>
    <source>
        <strain>ATCC 25618 / H37Rv</strain>
    </source>
</reference>
<reference key="6">
    <citation type="journal article" date="2009" name="J. Biol. Chem.">
        <title>Profound asymmetry in the structure of the cAMP-free cAMP receptor protein (CRP) from Mycobacterium tuberculosis.</title>
        <authorList>
            <person name="Gallagher D.T."/>
            <person name="Smith N."/>
            <person name="Kim S.K."/>
            <person name="Robinson H."/>
            <person name="Reddy P.T."/>
        </authorList>
    </citation>
    <scope>X-RAY CRYSTALLOGRAPHY (2.00 ANGSTROMS) OF APO-CRP (OFF-STATE)</scope>
    <scope>SUBUNIT</scope>
    <source>
        <strain>ATCC 25618 / H37Rv</strain>
    </source>
</reference>
<reference key="7">
    <citation type="journal article" date="2009" name="J. Biol. Chem.">
        <title>Structural insights into the mechanism of the allosteric transitions of Mycobacterium tuberculosis cAMP receptor protein.</title>
        <authorList>
            <person name="Reddy M.C."/>
            <person name="Palaninathan S.K."/>
            <person name="Bruning J.B."/>
            <person name="Thurman C."/>
            <person name="Smith D."/>
            <person name="Sacchettini J.C."/>
        </authorList>
    </citation>
    <scope>X-RAY CRYSTALLOGRAPHY (2.20 ANGSTROMS) IN COMPLEX WITH CAMP (ON-STATE) AND IN COMPLEX WITH A CAMP ANALOG</scope>
    <scope>SUBUNIT</scope>
    <scope>CAMP-BINDING</scope>
    <source>
        <strain>ATCC 25618 / H37Rv</strain>
    </source>
</reference>
<reference key="8">
    <citation type="journal article" date="2010" name="Biophys. J.">
        <title>Mapping conformational transitions in cyclic AMP receptor protein: crystal structure and normal-mode analysis of Mycobacterium tuberculosis apo-cAMP receptor protein.</title>
        <authorList>
            <person name="Kumar P."/>
            <person name="Joshi D.C."/>
            <person name="Akif M."/>
            <person name="Akhter Y."/>
            <person name="Hasnain S.E."/>
            <person name="Mande S.C."/>
        </authorList>
    </citation>
    <scope>X-RAY CRYSTALLOGRAPHY (2.90 ANGSTROMS)</scope>
    <source>
        <strain>ATCC 25618 / H37Rv</strain>
    </source>
</reference>
<reference key="9">
    <citation type="submission" date="2010-05" db="PDB data bank">
        <title>Crystal structure of cAMP receptor protein from Mycobacterium tuberculosis in complex with DNA and cAMP.</title>
        <authorList>
            <person name="Akhter Y."/>
            <person name="Pogenberg V."/>
            <person name="Hasnain S.E."/>
            <person name="Wilmanns M."/>
        </authorList>
    </citation>
    <scope>X-RAY CRYSTALLOGRAPHY (2.90 ANGSTROMS) IN COMPLEX WITH CAMP AND DNA</scope>
</reference>
<reference key="10">
    <citation type="journal article" date="2011" name="J. Am. Chem. Soc.">
        <title>Solution NMR evidence for symmetry in functionally or crystallographically asymmetric homodimers.</title>
        <authorList>
            <person name="Godoy-Ruiz R."/>
            <person name="Krejcirikova A."/>
            <person name="Gallagher D.T."/>
            <person name="Tugarinov V."/>
        </authorList>
    </citation>
    <scope>STRUCTURE BY NMR</scope>
    <source>
        <strain>ATCC 25618 / H37Rv</strain>
    </source>
</reference>
<comment type="function">
    <text evidence="3 6">Global transcriptional regulator that complexes with cAMP and binds to specific DNA promoter sites, causing DNA-bending, to regulate transcription. cAMP improves binding to specific DNA sequences, probably by altering protein conformation. The CRP regulon is predicted to contain about 115 genes. Some genes are activated by CRP (rpfA, whiB1) while others are repressed (fadD10). There are 2 CRP-binding sites in the promoter of whiB1, at low concentrations of CRP with or without cAMP transcription of whiB1 is enhanced via site CRP1, then repressed as site CRP2 is filled.</text>
</comment>
<comment type="subunit">
    <text evidence="4 5 6 7">Homodimer; in the absence of cAMP the DNA-binding domains are asymmetric in one structure; upon cAMP binding the dimer becomes symmetric, preparing it to bind DNA.</text>
</comment>
<comment type="disruption phenotype">
    <text evidence="3">Grows more slowly in aerobic liquid culture and on plates, severely impaired growth in unactivated mouse bone marrow-derived macrophages and in infected mice.</text>
</comment>
<protein>
    <recommendedName>
        <fullName evidence="8">CRP-like cAMP-activated global transcriptional regulator</fullName>
    </recommendedName>
    <alternativeName>
        <fullName evidence="8">cAMP receptor protein</fullName>
        <shortName evidence="8">CRP</shortName>
    </alternativeName>
    <alternativeName>
        <fullName evidence="8">cAMP regulatory protein</fullName>
    </alternativeName>
</protein>
<feature type="chain" id="PRO_0000420402" description="CRP-like cAMP-activated global transcriptional regulator">
    <location>
        <begin position="1"/>
        <end position="224"/>
    </location>
</feature>
<feature type="domain" description="HTH crp-type" evidence="2">
    <location>
        <begin position="144"/>
        <end position="217"/>
    </location>
</feature>
<feature type="DNA-binding region" description="H-T-H motif" evidence="2">
    <location>
        <begin position="177"/>
        <end position="196"/>
    </location>
</feature>
<feature type="binding site" evidence="1">
    <location>
        <begin position="64"/>
        <end position="70"/>
    </location>
    <ligand>
        <name>3',5'-cyclic AMP</name>
        <dbReference type="ChEBI" id="CHEBI:58165"/>
        <label>1</label>
    </ligand>
</feature>
<feature type="binding site" evidence="7">
    <location>
        <begin position="79"/>
        <end position="82"/>
    </location>
    <ligand>
        <name>3',5'-cyclic AMP</name>
        <dbReference type="ChEBI" id="CHEBI:58165"/>
        <label>1</label>
    </ligand>
</feature>
<feature type="binding site" evidence="7">
    <location>
        <begin position="89"/>
        <end position="90"/>
    </location>
    <ligand>
        <name>3',5'-cyclic AMP</name>
        <dbReference type="ChEBI" id="CHEBI:58165"/>
        <label>1</label>
    </ligand>
</feature>
<feature type="binding site" evidence="7">
    <location>
        <begin position="134"/>
        <end position="135"/>
    </location>
    <ligand>
        <name>3',5'-cyclic AMP</name>
        <dbReference type="ChEBI" id="CHEBI:58165"/>
        <label>1</label>
    </ligand>
</feature>
<feature type="binding site" evidence="1">
    <location>
        <begin position="142"/>
        <end position="143"/>
    </location>
    <ligand>
        <name>3',5'-cyclic AMP</name>
        <dbReference type="ChEBI" id="CHEBI:58165"/>
        <label>2</label>
    </ligand>
</feature>
<feature type="binding site" evidence="1">
    <location>
        <begin position="178"/>
        <end position="188"/>
    </location>
    <ligand>
        <name>3',5'-cyclic AMP</name>
        <dbReference type="ChEBI" id="CHEBI:58165"/>
        <label>2</label>
    </ligand>
</feature>
<feature type="helix" evidence="9">
    <location>
        <begin position="2"/>
        <end position="5"/>
    </location>
</feature>
<feature type="helix" evidence="11">
    <location>
        <begin position="9"/>
        <end position="11"/>
    </location>
</feature>
<feature type="strand" evidence="12">
    <location>
        <begin position="12"/>
        <end position="14"/>
    </location>
</feature>
<feature type="helix" evidence="9">
    <location>
        <begin position="20"/>
        <end position="23"/>
    </location>
</feature>
<feature type="strand" evidence="9">
    <location>
        <begin position="28"/>
        <end position="31"/>
    </location>
</feature>
<feature type="strand" evidence="9">
    <location>
        <begin position="36"/>
        <end position="38"/>
    </location>
</feature>
<feature type="strand" evidence="10">
    <location>
        <begin position="42"/>
        <end position="44"/>
    </location>
</feature>
<feature type="strand" evidence="9">
    <location>
        <begin position="46"/>
        <end position="53"/>
    </location>
</feature>
<feature type="strand" evidence="9">
    <location>
        <begin position="55"/>
        <end position="60"/>
    </location>
</feature>
<feature type="strand" evidence="9">
    <location>
        <begin position="66"/>
        <end position="72"/>
    </location>
</feature>
<feature type="strand" evidence="9">
    <location>
        <begin position="77"/>
        <end position="79"/>
    </location>
</feature>
<feature type="helix" evidence="9">
    <location>
        <begin position="81"/>
        <end position="84"/>
    </location>
</feature>
<feature type="strand" evidence="9">
    <location>
        <begin position="90"/>
        <end position="97"/>
    </location>
</feature>
<feature type="strand" evidence="9">
    <location>
        <begin position="99"/>
        <end position="105"/>
    </location>
</feature>
<feature type="helix" evidence="9">
    <location>
        <begin position="106"/>
        <end position="111"/>
    </location>
</feature>
<feature type="helix" evidence="9">
    <location>
        <begin position="117"/>
        <end position="143"/>
    </location>
</feature>
<feature type="helix" evidence="9">
    <location>
        <begin position="146"/>
        <end position="161"/>
    </location>
</feature>
<feature type="strand" evidence="9">
    <location>
        <begin position="162"/>
        <end position="165"/>
    </location>
</feature>
<feature type="strand" evidence="9">
    <location>
        <begin position="168"/>
        <end position="172"/>
    </location>
</feature>
<feature type="helix" evidence="9">
    <location>
        <begin position="177"/>
        <end position="184"/>
    </location>
</feature>
<feature type="helix" evidence="9">
    <location>
        <begin position="188"/>
        <end position="200"/>
    </location>
</feature>
<feature type="strand" evidence="9">
    <location>
        <begin position="203"/>
        <end position="207"/>
    </location>
</feature>
<feature type="strand" evidence="9">
    <location>
        <begin position="210"/>
        <end position="214"/>
    </location>
</feature>
<feature type="helix" evidence="9">
    <location>
        <begin position="216"/>
        <end position="223"/>
    </location>
</feature>
<name>CRPL_MYCTU</name>
<sequence>MDEILARAGIFQGVEPSAIAALTKQLQPVDFPRGHTVFAEGEPGDRLYIIISGKVKIGRRAPDGRENLLTIMGPSDMFGELSIFDPGPRTSSATTITEVRAVSMDRDALRSWIADRPEISEQLLRVLARRLRRTNNNLADLIFTDVPGRVAKQLLQLAQRFGTQEGGALRVTHDLTQEEIAQLVGASRETVNKALADFAHRGWIRLEGKSVLISDSERLARRAR</sequence>
<evidence type="ECO:0000250" key="1">
    <source>
        <dbReference type="UniProtKB" id="P0ACJ8"/>
    </source>
</evidence>
<evidence type="ECO:0000255" key="2">
    <source>
        <dbReference type="PROSITE-ProRule" id="PRU00387"/>
    </source>
</evidence>
<evidence type="ECO:0000269" key="3">
    <source>
    </source>
</evidence>
<evidence type="ECO:0000269" key="4">
    <source>
    </source>
</evidence>
<evidence type="ECO:0000269" key="5">
    <source>
    </source>
</evidence>
<evidence type="ECO:0000269" key="6">
    <source>
    </source>
</evidence>
<evidence type="ECO:0000269" key="7">
    <source ref="9"/>
</evidence>
<evidence type="ECO:0000303" key="8">
    <source>
    </source>
</evidence>
<evidence type="ECO:0007829" key="9">
    <source>
        <dbReference type="PDB" id="3D0S"/>
    </source>
</evidence>
<evidence type="ECO:0007829" key="10">
    <source>
        <dbReference type="PDB" id="3H3U"/>
    </source>
</evidence>
<evidence type="ECO:0007829" key="11">
    <source>
        <dbReference type="PDB" id="3I54"/>
    </source>
</evidence>
<evidence type="ECO:0007829" key="12">
    <source>
        <dbReference type="PDB" id="3MZH"/>
    </source>
</evidence>
<keyword id="KW-0002">3D-structure</keyword>
<keyword id="KW-0010">Activator</keyword>
<keyword id="KW-0114">cAMP</keyword>
<keyword id="KW-0116">cAMP-binding</keyword>
<keyword id="KW-0238">DNA-binding</keyword>
<keyword id="KW-0547">Nucleotide-binding</keyword>
<keyword id="KW-1185">Reference proteome</keyword>
<keyword id="KW-0678">Repressor</keyword>
<keyword id="KW-0804">Transcription</keyword>
<keyword id="KW-0805">Transcription regulation</keyword>
<keyword id="KW-0843">Virulence</keyword>